<dbReference type="EMBL" id="AE005674">
    <property type="protein sequence ID" value="AAN43493.1"/>
    <property type="molecule type" value="Genomic_DNA"/>
</dbReference>
<dbReference type="EMBL" id="AE014073">
    <property type="protein sequence ID" value="AAP17323.1"/>
    <property type="molecule type" value="Genomic_DNA"/>
</dbReference>
<dbReference type="RefSeq" id="NP_707786.1">
    <property type="nucleotide sequence ID" value="NC_004337.2"/>
</dbReference>
<dbReference type="RefSeq" id="WP_001291603.1">
    <property type="nucleotide sequence ID" value="NZ_WPGW01000105.1"/>
</dbReference>
<dbReference type="SMR" id="P0ABZ0"/>
<dbReference type="STRING" id="198214.SF1940"/>
<dbReference type="PaxDb" id="198214-SF1940"/>
<dbReference type="GeneID" id="1025138"/>
<dbReference type="GeneID" id="93776196"/>
<dbReference type="KEGG" id="sfl:SF1940"/>
<dbReference type="KEGG" id="sfx:S2031"/>
<dbReference type="PATRIC" id="fig|198214.7.peg.2315"/>
<dbReference type="HOGENOM" id="CLU_122824_0_0_6"/>
<dbReference type="Proteomes" id="UP000001006">
    <property type="component" value="Chromosome"/>
</dbReference>
<dbReference type="Proteomes" id="UP000002673">
    <property type="component" value="Chromosome"/>
</dbReference>
<dbReference type="GO" id="GO:0005737">
    <property type="term" value="C:cytoplasm"/>
    <property type="evidence" value="ECO:0007669"/>
    <property type="project" value="UniProtKB-SubCell"/>
</dbReference>
<dbReference type="GO" id="GO:0003677">
    <property type="term" value="F:DNA binding"/>
    <property type="evidence" value="ECO:0007669"/>
    <property type="project" value="UniProtKB-UniRule"/>
</dbReference>
<dbReference type="GO" id="GO:0008270">
    <property type="term" value="F:zinc ion binding"/>
    <property type="evidence" value="ECO:0007669"/>
    <property type="project" value="UniProtKB-UniRule"/>
</dbReference>
<dbReference type="GO" id="GO:0044781">
    <property type="term" value="P:bacterial-type flagellum organization"/>
    <property type="evidence" value="ECO:0007669"/>
    <property type="project" value="UniProtKB-KW"/>
</dbReference>
<dbReference type="GO" id="GO:0045893">
    <property type="term" value="P:positive regulation of DNA-templated transcription"/>
    <property type="evidence" value="ECO:0007669"/>
    <property type="project" value="InterPro"/>
</dbReference>
<dbReference type="GO" id="GO:1902208">
    <property type="term" value="P:regulation of bacterial-type flagellum assembly"/>
    <property type="evidence" value="ECO:0007669"/>
    <property type="project" value="UniProtKB-UniRule"/>
</dbReference>
<dbReference type="HAMAP" id="MF_01891">
    <property type="entry name" value="FhlC"/>
    <property type="match status" value="1"/>
</dbReference>
<dbReference type="InterPro" id="IPR007944">
    <property type="entry name" value="FlhC"/>
</dbReference>
<dbReference type="NCBIfam" id="NF009365">
    <property type="entry name" value="PRK12722.1"/>
    <property type="match status" value="1"/>
</dbReference>
<dbReference type="Pfam" id="PF05280">
    <property type="entry name" value="FlhC"/>
    <property type="match status" value="1"/>
</dbReference>
<dbReference type="PIRSF" id="PIRSF003159">
    <property type="entry name" value="FlhC"/>
    <property type="match status" value="1"/>
</dbReference>
<dbReference type="SUPFAM" id="SSF160930">
    <property type="entry name" value="FlhC-like"/>
    <property type="match status" value="1"/>
</dbReference>
<proteinExistence type="inferred from homology"/>
<name>FLHC_SHIFL</name>
<reference key="1">
    <citation type="journal article" date="2002" name="Nucleic Acids Res.">
        <title>Genome sequence of Shigella flexneri 2a: insights into pathogenicity through comparison with genomes of Escherichia coli K12 and O157.</title>
        <authorList>
            <person name="Jin Q."/>
            <person name="Yuan Z."/>
            <person name="Xu J."/>
            <person name="Wang Y."/>
            <person name="Shen Y."/>
            <person name="Lu W."/>
            <person name="Wang J."/>
            <person name="Liu H."/>
            <person name="Yang J."/>
            <person name="Yang F."/>
            <person name="Zhang X."/>
            <person name="Zhang J."/>
            <person name="Yang G."/>
            <person name="Wu H."/>
            <person name="Qu D."/>
            <person name="Dong J."/>
            <person name="Sun L."/>
            <person name="Xue Y."/>
            <person name="Zhao A."/>
            <person name="Gao Y."/>
            <person name="Zhu J."/>
            <person name="Kan B."/>
            <person name="Ding K."/>
            <person name="Chen S."/>
            <person name="Cheng H."/>
            <person name="Yao Z."/>
            <person name="He B."/>
            <person name="Chen R."/>
            <person name="Ma D."/>
            <person name="Qiang B."/>
            <person name="Wen Y."/>
            <person name="Hou Y."/>
            <person name="Yu J."/>
        </authorList>
    </citation>
    <scope>NUCLEOTIDE SEQUENCE [LARGE SCALE GENOMIC DNA]</scope>
    <source>
        <strain>301 / Serotype 2a</strain>
    </source>
</reference>
<reference key="2">
    <citation type="journal article" date="2003" name="Infect. Immun.">
        <title>Complete genome sequence and comparative genomics of Shigella flexneri serotype 2a strain 2457T.</title>
        <authorList>
            <person name="Wei J."/>
            <person name="Goldberg M.B."/>
            <person name="Burland V."/>
            <person name="Venkatesan M.M."/>
            <person name="Deng W."/>
            <person name="Fournier G."/>
            <person name="Mayhew G.F."/>
            <person name="Plunkett G. III"/>
            <person name="Rose D.J."/>
            <person name="Darling A."/>
            <person name="Mau B."/>
            <person name="Perna N.T."/>
            <person name="Payne S.M."/>
            <person name="Runyen-Janecky L.J."/>
            <person name="Zhou S."/>
            <person name="Schwartz D.C."/>
            <person name="Blattner F.R."/>
        </authorList>
    </citation>
    <scope>NUCLEOTIDE SEQUENCE [LARGE SCALE GENOMIC DNA]</scope>
    <source>
        <strain>ATCC 700930 / 2457T / Serotype 2a</strain>
    </source>
</reference>
<protein>
    <recommendedName>
        <fullName evidence="1">Flagellar transcriptional regulator FlhC</fullName>
    </recommendedName>
</protein>
<comment type="function">
    <text evidence="1">Functions in complex with FlhD as a master transcriptional regulator that regulates transcription of several flagellar and non-flagellar operons by binding to their promoter region. Activates expression of class 2 flagellar genes, including fliA, which is a flagellum-specific sigma factor that turns on the class 3 genes. Also regulates genes whose products function in a variety of physiological pathways.</text>
</comment>
<comment type="cofactor">
    <cofactor evidence="1">
        <name>Zn(2+)</name>
        <dbReference type="ChEBI" id="CHEBI:29105"/>
    </cofactor>
    <text evidence="1">Binds 1 zinc ion per subunit.</text>
</comment>
<comment type="subunit">
    <text evidence="1">Heterohexamer composed of two FlhC and four FlhD subunits. Each FlhC binds a FlhD dimer, forming a heterotrimer, and a hexamer assembles by dimerization of two heterotrimers.</text>
</comment>
<comment type="subcellular location">
    <subcellularLocation>
        <location evidence="1">Cytoplasm</location>
    </subcellularLocation>
</comment>
<comment type="similarity">
    <text evidence="1">Belongs to the FlhC family.</text>
</comment>
<organism>
    <name type="scientific">Shigella flexneri</name>
    <dbReference type="NCBI Taxonomy" id="623"/>
    <lineage>
        <taxon>Bacteria</taxon>
        <taxon>Pseudomonadati</taxon>
        <taxon>Pseudomonadota</taxon>
        <taxon>Gammaproteobacteria</taxon>
        <taxon>Enterobacterales</taxon>
        <taxon>Enterobacteriaceae</taxon>
        <taxon>Shigella</taxon>
    </lineage>
</organism>
<keyword id="KW-0010">Activator</keyword>
<keyword id="KW-1005">Bacterial flagellum biogenesis</keyword>
<keyword id="KW-0963">Cytoplasm</keyword>
<keyword id="KW-0238">DNA-binding</keyword>
<keyword id="KW-0479">Metal-binding</keyword>
<keyword id="KW-1185">Reference proteome</keyword>
<keyword id="KW-0804">Transcription</keyword>
<keyword id="KW-0805">Transcription regulation</keyword>
<keyword id="KW-0862">Zinc</keyword>
<accession>P0ABZ0</accession>
<accession>P11165</accession>
<accession>P76303</accession>
<sequence>MSEKSIVQEARDIQLAMELITLGARLQMLESETQLSRGRLIKLYKELRGSPPPKGMLPFSTDWFMTWEQNVHASMFCNAWQFLLKTGLCNGVDAVIKAYRLYLEQCPQAEEGPLLALTRAWTLVRFVESGLLQLSSCNCCGGNFITHAHQPVGSFACSLCQPPSRAVKRRKLSQNPADIIPQLLDEQRVQAV</sequence>
<feature type="chain" id="PRO_0000064343" description="Flagellar transcriptional regulator FlhC">
    <location>
        <begin position="1"/>
        <end position="192"/>
    </location>
</feature>
<feature type="binding site" evidence="1">
    <location>
        <position position="137"/>
    </location>
    <ligand>
        <name>Zn(2+)</name>
        <dbReference type="ChEBI" id="CHEBI:29105"/>
    </ligand>
</feature>
<feature type="binding site" evidence="1">
    <location>
        <position position="140"/>
    </location>
    <ligand>
        <name>Zn(2+)</name>
        <dbReference type="ChEBI" id="CHEBI:29105"/>
    </ligand>
</feature>
<feature type="binding site" evidence="1">
    <location>
        <position position="157"/>
    </location>
    <ligand>
        <name>Zn(2+)</name>
        <dbReference type="ChEBI" id="CHEBI:29105"/>
    </ligand>
</feature>
<feature type="binding site" evidence="1">
    <location>
        <position position="160"/>
    </location>
    <ligand>
        <name>Zn(2+)</name>
        <dbReference type="ChEBI" id="CHEBI:29105"/>
    </ligand>
</feature>
<evidence type="ECO:0000255" key="1">
    <source>
        <dbReference type="HAMAP-Rule" id="MF_01891"/>
    </source>
</evidence>
<gene>
    <name evidence="1" type="primary">flhC</name>
    <name type="ordered locus">SF1940</name>
    <name type="ordered locus">S2031</name>
</gene>